<keyword id="KW-1185">Reference proteome</keyword>
<keyword id="KW-0687">Ribonucleoprotein</keyword>
<keyword id="KW-0689">Ribosomal protein</keyword>
<keyword id="KW-0694">RNA-binding</keyword>
<keyword id="KW-0699">rRNA-binding</keyword>
<evidence type="ECO:0000255" key="1">
    <source>
        <dbReference type="HAMAP-Rule" id="MF_01343"/>
    </source>
</evidence>
<evidence type="ECO:0000305" key="2"/>
<dbReference type="EMBL" id="AE003852">
    <property type="protein sequence ID" value="AAF93812.1"/>
    <property type="molecule type" value="Genomic_DNA"/>
</dbReference>
<dbReference type="PIR" id="D82298">
    <property type="entry name" value="D82298"/>
</dbReference>
<dbReference type="RefSeq" id="NP_230295.1">
    <property type="nucleotide sequence ID" value="NC_002505.1"/>
</dbReference>
<dbReference type="RefSeq" id="WP_000055654.1">
    <property type="nucleotide sequence ID" value="NZ_LT906614.1"/>
</dbReference>
<dbReference type="SMR" id="Q9KU77"/>
<dbReference type="STRING" id="243277.VC_0646"/>
<dbReference type="DNASU" id="2615436"/>
<dbReference type="EnsemblBacteria" id="AAF93812">
    <property type="protein sequence ID" value="AAF93812"/>
    <property type="gene ID" value="VC_0646"/>
</dbReference>
<dbReference type="GeneID" id="89515201"/>
<dbReference type="KEGG" id="vch:VC_0646"/>
<dbReference type="PATRIC" id="fig|243277.26.peg.616"/>
<dbReference type="eggNOG" id="COG0184">
    <property type="taxonomic scope" value="Bacteria"/>
</dbReference>
<dbReference type="HOGENOM" id="CLU_148518_0_0_6"/>
<dbReference type="Proteomes" id="UP000000584">
    <property type="component" value="Chromosome 1"/>
</dbReference>
<dbReference type="GO" id="GO:0022627">
    <property type="term" value="C:cytosolic small ribosomal subunit"/>
    <property type="evidence" value="ECO:0000318"/>
    <property type="project" value="GO_Central"/>
</dbReference>
<dbReference type="GO" id="GO:0019843">
    <property type="term" value="F:rRNA binding"/>
    <property type="evidence" value="ECO:0007669"/>
    <property type="project" value="UniProtKB-UniRule"/>
</dbReference>
<dbReference type="GO" id="GO:0003735">
    <property type="term" value="F:structural constituent of ribosome"/>
    <property type="evidence" value="ECO:0007669"/>
    <property type="project" value="InterPro"/>
</dbReference>
<dbReference type="GO" id="GO:0006412">
    <property type="term" value="P:translation"/>
    <property type="evidence" value="ECO:0007669"/>
    <property type="project" value="UniProtKB-UniRule"/>
</dbReference>
<dbReference type="CDD" id="cd00353">
    <property type="entry name" value="Ribosomal_S15p_S13e"/>
    <property type="match status" value="1"/>
</dbReference>
<dbReference type="FunFam" id="1.10.287.10:FF:000002">
    <property type="entry name" value="30S ribosomal protein S15"/>
    <property type="match status" value="1"/>
</dbReference>
<dbReference type="Gene3D" id="6.10.250.3130">
    <property type="match status" value="1"/>
</dbReference>
<dbReference type="Gene3D" id="1.10.287.10">
    <property type="entry name" value="S15/NS1, RNA-binding"/>
    <property type="match status" value="1"/>
</dbReference>
<dbReference type="HAMAP" id="MF_01343_B">
    <property type="entry name" value="Ribosomal_uS15_B"/>
    <property type="match status" value="1"/>
</dbReference>
<dbReference type="InterPro" id="IPR000589">
    <property type="entry name" value="Ribosomal_uS15"/>
</dbReference>
<dbReference type="InterPro" id="IPR005290">
    <property type="entry name" value="Ribosomal_uS15_bac-type"/>
</dbReference>
<dbReference type="InterPro" id="IPR009068">
    <property type="entry name" value="uS15_NS1_RNA-bd_sf"/>
</dbReference>
<dbReference type="NCBIfam" id="TIGR00952">
    <property type="entry name" value="S15_bact"/>
    <property type="match status" value="1"/>
</dbReference>
<dbReference type="PANTHER" id="PTHR23321">
    <property type="entry name" value="RIBOSOMAL PROTEIN S15, BACTERIAL AND ORGANELLAR"/>
    <property type="match status" value="1"/>
</dbReference>
<dbReference type="PANTHER" id="PTHR23321:SF26">
    <property type="entry name" value="SMALL RIBOSOMAL SUBUNIT PROTEIN US15M"/>
    <property type="match status" value="1"/>
</dbReference>
<dbReference type="Pfam" id="PF00312">
    <property type="entry name" value="Ribosomal_S15"/>
    <property type="match status" value="1"/>
</dbReference>
<dbReference type="SMART" id="SM01387">
    <property type="entry name" value="Ribosomal_S15"/>
    <property type="match status" value="1"/>
</dbReference>
<dbReference type="SUPFAM" id="SSF47060">
    <property type="entry name" value="S15/NS1 RNA-binding domain"/>
    <property type="match status" value="1"/>
</dbReference>
<dbReference type="PROSITE" id="PS00362">
    <property type="entry name" value="RIBOSOMAL_S15"/>
    <property type="match status" value="1"/>
</dbReference>
<feature type="chain" id="PRO_0000115581" description="Small ribosomal subunit protein uS15">
    <location>
        <begin position="1"/>
        <end position="89"/>
    </location>
</feature>
<comment type="function">
    <text evidence="1">One of the primary rRNA binding proteins, it binds directly to 16S rRNA where it helps nucleate assembly of the platform of the 30S subunit by binding and bridging several RNA helices of the 16S rRNA.</text>
</comment>
<comment type="function">
    <text evidence="1">Forms an intersubunit bridge (bridge B4) with the 23S rRNA of the 50S subunit in the ribosome.</text>
</comment>
<comment type="subunit">
    <text evidence="1">Part of the 30S ribosomal subunit. Forms a bridge to the 50S subunit in the 70S ribosome, contacting the 23S rRNA.</text>
</comment>
<comment type="similarity">
    <text evidence="1">Belongs to the universal ribosomal protein uS15 family.</text>
</comment>
<sequence>MSLNAETKAAIVAEYARCENDTGSPEVQIALLTASINHLQGHFQAHKGDHHSRRGLLRMVSSRRKLLDYLKGKDLSRYQDLIKRLGLRR</sequence>
<proteinExistence type="inferred from homology"/>
<reference key="1">
    <citation type="journal article" date="2000" name="Nature">
        <title>DNA sequence of both chromosomes of the cholera pathogen Vibrio cholerae.</title>
        <authorList>
            <person name="Heidelberg J.F."/>
            <person name="Eisen J.A."/>
            <person name="Nelson W.C."/>
            <person name="Clayton R.A."/>
            <person name="Gwinn M.L."/>
            <person name="Dodson R.J."/>
            <person name="Haft D.H."/>
            <person name="Hickey E.K."/>
            <person name="Peterson J.D."/>
            <person name="Umayam L.A."/>
            <person name="Gill S.R."/>
            <person name="Nelson K.E."/>
            <person name="Read T.D."/>
            <person name="Tettelin H."/>
            <person name="Richardson D.L."/>
            <person name="Ermolaeva M.D."/>
            <person name="Vamathevan J.J."/>
            <person name="Bass S."/>
            <person name="Qin H."/>
            <person name="Dragoi I."/>
            <person name="Sellers P."/>
            <person name="McDonald L.A."/>
            <person name="Utterback T.R."/>
            <person name="Fleischmann R.D."/>
            <person name="Nierman W.C."/>
            <person name="White O."/>
            <person name="Salzberg S.L."/>
            <person name="Smith H.O."/>
            <person name="Colwell R.R."/>
            <person name="Mekalanos J.J."/>
            <person name="Venter J.C."/>
            <person name="Fraser C.M."/>
        </authorList>
    </citation>
    <scope>NUCLEOTIDE SEQUENCE [LARGE SCALE GENOMIC DNA]</scope>
    <source>
        <strain>ATCC 39315 / El Tor Inaba N16961</strain>
    </source>
</reference>
<accession>Q9KU77</accession>
<organism>
    <name type="scientific">Vibrio cholerae serotype O1 (strain ATCC 39315 / El Tor Inaba N16961)</name>
    <dbReference type="NCBI Taxonomy" id="243277"/>
    <lineage>
        <taxon>Bacteria</taxon>
        <taxon>Pseudomonadati</taxon>
        <taxon>Pseudomonadota</taxon>
        <taxon>Gammaproteobacteria</taxon>
        <taxon>Vibrionales</taxon>
        <taxon>Vibrionaceae</taxon>
        <taxon>Vibrio</taxon>
    </lineage>
</organism>
<name>RS15_VIBCH</name>
<gene>
    <name evidence="1" type="primary">rpsO</name>
    <name type="ordered locus">VC_0646</name>
</gene>
<protein>
    <recommendedName>
        <fullName evidence="1">Small ribosomal subunit protein uS15</fullName>
    </recommendedName>
    <alternativeName>
        <fullName evidence="2">30S ribosomal protein S15</fullName>
    </alternativeName>
</protein>